<proteinExistence type="evidence at protein level"/>
<accession>P33744</accession>
<accession>Q45808</accession>
<accession>Q45809</accession>
<geneLocation type="plasmid">
    <name>pSOL1</name>
</geneLocation>
<gene>
    <name evidence="4" type="primary">adhE</name>
    <name evidence="5" type="synonym">aad</name>
    <name type="ordered locus">CA_P0162</name>
</gene>
<feature type="chain" id="PRO_0000087839" description="Aldehyde-alcohol dehydrogenase">
    <location>
        <begin position="1"/>
        <end position="862"/>
    </location>
</feature>
<feature type="active site" evidence="1">
    <location>
        <position position="244"/>
    </location>
</feature>
<feature type="binding site" evidence="2">
    <location>
        <begin position="420"/>
        <end position="425"/>
    </location>
    <ligand>
        <name>NAD(+)</name>
        <dbReference type="ChEBI" id="CHEBI:57540"/>
    </ligand>
</feature>
<dbReference type="EC" id="1.1.1.1" evidence="3"/>
<dbReference type="EC" id="1.2.1.3" evidence="3"/>
<dbReference type="EMBL" id="X72831">
    <property type="protein sequence ID" value="CAA51344.1"/>
    <property type="molecule type" value="Genomic_DNA"/>
</dbReference>
<dbReference type="EMBL" id="L14817">
    <property type="protein sequence ID" value="AAD04638.1"/>
    <property type="molecule type" value="Genomic_DNA"/>
</dbReference>
<dbReference type="EMBL" id="AE001438">
    <property type="protein sequence ID" value="AAK76907.1"/>
    <property type="molecule type" value="Genomic_DNA"/>
</dbReference>
<dbReference type="PIR" id="A49346">
    <property type="entry name" value="A49346"/>
</dbReference>
<dbReference type="RefSeq" id="NP_149325.1">
    <property type="nucleotide sequence ID" value="NC_001988.2"/>
</dbReference>
<dbReference type="RefSeq" id="WP_010890846.1">
    <property type="nucleotide sequence ID" value="NC_001988.2"/>
</dbReference>
<dbReference type="SMR" id="P33744"/>
<dbReference type="GeneID" id="45000387"/>
<dbReference type="KEGG" id="cac:CA_P0162"/>
<dbReference type="PATRIC" id="fig|272562.8.peg.163"/>
<dbReference type="HOGENOM" id="CLU_007207_1_1_9"/>
<dbReference type="OrthoDB" id="9804734at2"/>
<dbReference type="BioCyc" id="MetaCyc:AADCLOS-MONOMER"/>
<dbReference type="Proteomes" id="UP000000814">
    <property type="component" value="Plasmid pSOL1"/>
</dbReference>
<dbReference type="GO" id="GO:0005829">
    <property type="term" value="C:cytosol"/>
    <property type="evidence" value="ECO:0007669"/>
    <property type="project" value="TreeGrafter"/>
</dbReference>
<dbReference type="GO" id="GO:0008774">
    <property type="term" value="F:acetaldehyde dehydrogenase (acetylating) activity"/>
    <property type="evidence" value="ECO:0007669"/>
    <property type="project" value="InterPro"/>
</dbReference>
<dbReference type="GO" id="GO:0004022">
    <property type="term" value="F:alcohol dehydrogenase (NAD+) activity"/>
    <property type="evidence" value="ECO:0000314"/>
    <property type="project" value="CACAO"/>
</dbReference>
<dbReference type="GO" id="GO:0008106">
    <property type="term" value="F:alcohol dehydrogenase (NADP+) activity"/>
    <property type="evidence" value="ECO:0007669"/>
    <property type="project" value="TreeGrafter"/>
</dbReference>
<dbReference type="GO" id="GO:0004029">
    <property type="term" value="F:aldehyde dehydrogenase (NAD+) activity"/>
    <property type="evidence" value="ECO:0007669"/>
    <property type="project" value="UniProtKB-EC"/>
</dbReference>
<dbReference type="GO" id="GO:1990362">
    <property type="term" value="F:butanol dehydrogenase (NAD+) activity"/>
    <property type="evidence" value="ECO:0007669"/>
    <property type="project" value="InterPro"/>
</dbReference>
<dbReference type="GO" id="GO:0046872">
    <property type="term" value="F:metal ion binding"/>
    <property type="evidence" value="ECO:0007669"/>
    <property type="project" value="InterPro"/>
</dbReference>
<dbReference type="GO" id="GO:1990002">
    <property type="term" value="F:methylglyoxal reductase (NADPH) (acetol producing) activity"/>
    <property type="evidence" value="ECO:0007669"/>
    <property type="project" value="TreeGrafter"/>
</dbReference>
<dbReference type="GO" id="GO:0006066">
    <property type="term" value="P:alcohol metabolic process"/>
    <property type="evidence" value="ECO:0007669"/>
    <property type="project" value="InterPro"/>
</dbReference>
<dbReference type="GO" id="GO:0015976">
    <property type="term" value="P:carbon utilization"/>
    <property type="evidence" value="ECO:0007669"/>
    <property type="project" value="InterPro"/>
</dbReference>
<dbReference type="CDD" id="cd08178">
    <property type="entry name" value="AAD_C"/>
    <property type="match status" value="1"/>
</dbReference>
<dbReference type="CDD" id="cd07081">
    <property type="entry name" value="ALDH_F20_ACDH_EutE-like"/>
    <property type="match status" value="1"/>
</dbReference>
<dbReference type="FunFam" id="3.40.50.1970:FF:000003">
    <property type="entry name" value="Alcohol dehydrogenase, iron-containing"/>
    <property type="match status" value="1"/>
</dbReference>
<dbReference type="FunFam" id="1.20.1090.10:FF:000001">
    <property type="entry name" value="Aldehyde-alcohol dehydrogenase"/>
    <property type="match status" value="1"/>
</dbReference>
<dbReference type="FunFam" id="3.40.309.10:FF:000007">
    <property type="entry name" value="Aldehyde-alcohol dehydrogenase"/>
    <property type="match status" value="1"/>
</dbReference>
<dbReference type="Gene3D" id="3.40.50.1970">
    <property type="match status" value="1"/>
</dbReference>
<dbReference type="Gene3D" id="3.40.605.10">
    <property type="entry name" value="Aldehyde Dehydrogenase, Chain A, domain 1"/>
    <property type="match status" value="1"/>
</dbReference>
<dbReference type="Gene3D" id="3.40.309.10">
    <property type="entry name" value="Aldehyde Dehydrogenase, Chain A, domain 2"/>
    <property type="match status" value="1"/>
</dbReference>
<dbReference type="Gene3D" id="1.20.1090.10">
    <property type="entry name" value="Dehydroquinate synthase-like - alpha domain"/>
    <property type="match status" value="1"/>
</dbReference>
<dbReference type="InterPro" id="IPR034789">
    <property type="entry name" value="AAD_C"/>
</dbReference>
<dbReference type="InterPro" id="IPR001670">
    <property type="entry name" value="ADH_Fe/GldA"/>
</dbReference>
<dbReference type="InterPro" id="IPR056798">
    <property type="entry name" value="ADH_Fe_C"/>
</dbReference>
<dbReference type="InterPro" id="IPR018211">
    <property type="entry name" value="ADH_Fe_CS"/>
</dbReference>
<dbReference type="InterPro" id="IPR016161">
    <property type="entry name" value="Ald_DH/histidinol_DH"/>
</dbReference>
<dbReference type="InterPro" id="IPR016163">
    <property type="entry name" value="Ald_DH_C"/>
</dbReference>
<dbReference type="InterPro" id="IPR016162">
    <property type="entry name" value="Ald_DH_N"/>
</dbReference>
<dbReference type="InterPro" id="IPR015590">
    <property type="entry name" value="Aldehyde_DH_dom"/>
</dbReference>
<dbReference type="InterPro" id="IPR044731">
    <property type="entry name" value="BDH-like"/>
</dbReference>
<dbReference type="InterPro" id="IPR012079">
    <property type="entry name" value="Bifunc_Ald-ADH"/>
</dbReference>
<dbReference type="NCBIfam" id="NF010378">
    <property type="entry name" value="PRK13805.1"/>
    <property type="match status" value="1"/>
</dbReference>
<dbReference type="PANTHER" id="PTHR43633">
    <property type="entry name" value="ALCOHOL DEHYDROGENASE YQHD"/>
    <property type="match status" value="1"/>
</dbReference>
<dbReference type="PANTHER" id="PTHR43633:SF1">
    <property type="entry name" value="ALCOHOL DEHYDROGENASE YQHD"/>
    <property type="match status" value="1"/>
</dbReference>
<dbReference type="Pfam" id="PF25137">
    <property type="entry name" value="ADH_Fe_C"/>
    <property type="match status" value="1"/>
</dbReference>
<dbReference type="Pfam" id="PF00171">
    <property type="entry name" value="Aldedh"/>
    <property type="match status" value="1"/>
</dbReference>
<dbReference type="Pfam" id="PF00465">
    <property type="entry name" value="Fe-ADH"/>
    <property type="match status" value="1"/>
</dbReference>
<dbReference type="PIRSF" id="PIRSF000111">
    <property type="entry name" value="ALDH_ADH"/>
    <property type="match status" value="1"/>
</dbReference>
<dbReference type="SUPFAM" id="SSF53720">
    <property type="entry name" value="ALDH-like"/>
    <property type="match status" value="1"/>
</dbReference>
<dbReference type="SUPFAM" id="SSF56796">
    <property type="entry name" value="Dehydroquinate synthase-like"/>
    <property type="match status" value="1"/>
</dbReference>
<dbReference type="PROSITE" id="PS00913">
    <property type="entry name" value="ADH_IRON_1"/>
    <property type="match status" value="1"/>
</dbReference>
<evidence type="ECO:0000250" key="1"/>
<evidence type="ECO:0000255" key="2"/>
<evidence type="ECO:0000269" key="3">
    <source>
    </source>
</evidence>
<evidence type="ECO:0000303" key="4">
    <source>
    </source>
</evidence>
<evidence type="ECO:0000303" key="5">
    <source>
    </source>
</evidence>
<evidence type="ECO:0000305" key="6"/>
<reference key="1">
    <citation type="journal article" date="1993" name="J. Bacteriol.">
        <title>Cloning, sequencing, and molecular analysis of the sol operon of Clostridium acetobutylicum, a chromosomal locus involved in solventogenesis.</title>
        <authorList>
            <person name="Fischer R.J."/>
            <person name="Helms J."/>
            <person name="Duerre P."/>
        </authorList>
    </citation>
    <scope>NUCLEOTIDE SEQUENCE [GENOMIC DNA]</scope>
    <source>
        <strain>ATCC 824 / DSM 792 / JCM 1419 / IAM 19013 / LMG 5710 / NBRC 13948 / NRRL B-527 / VKM B-1787 / 2291 / W</strain>
    </source>
</reference>
<reference key="2">
    <citation type="journal article" date="1994" name="J. Bacteriol.">
        <title>Molecular characterization of an aldehyde/alcohol dehydrogenase gene from Clostridium acetobutylicum ATCC 824.</title>
        <authorList>
            <person name="Nair R.V."/>
            <person name="Bennett G.N."/>
            <person name="Papoutsakis E.T."/>
        </authorList>
    </citation>
    <scope>NUCLEOTIDE SEQUENCE [GENOMIC DNA]</scope>
    <scope>FUNCTION</scope>
    <scope>CATALYTIC ACTIVITY</scope>
    <scope>INDUCTION</scope>
    <source>
        <strain>ATCC 824 / DSM 792 / JCM 1419 / IAM 19013 / LMG 5710 / NBRC 13948 / NRRL B-527 / VKM B-1787 / 2291 / W</strain>
    </source>
</reference>
<reference key="3">
    <citation type="journal article" date="2001" name="J. Bacteriol.">
        <title>Genome sequence and comparative analysis of the solvent-producing bacterium Clostridium acetobutylicum.</title>
        <authorList>
            <person name="Noelling J."/>
            <person name="Breton G."/>
            <person name="Omelchenko M.V."/>
            <person name="Makarova K.S."/>
            <person name="Zeng Q."/>
            <person name="Gibson R."/>
            <person name="Lee H.M."/>
            <person name="Dubois J."/>
            <person name="Qiu D."/>
            <person name="Hitti J."/>
            <person name="Wolf Y.I."/>
            <person name="Tatusov R.L."/>
            <person name="Sabathe F."/>
            <person name="Doucette-Stamm L.A."/>
            <person name="Soucaille P."/>
            <person name="Daly M.J."/>
            <person name="Bennett G.N."/>
            <person name="Koonin E.V."/>
            <person name="Smith D.R."/>
        </authorList>
    </citation>
    <scope>NUCLEOTIDE SEQUENCE [LARGE SCALE GENOMIC DNA]</scope>
    <source>
        <strain>ATCC 824 / DSM 792 / JCM 1419 / IAM 19013 / LMG 5710 / NBRC 13948 / NRRL B-527 / VKM B-1787 / 2291 / W</strain>
    </source>
</reference>
<sequence>MKVTTVKELDEKLKVIKEAQKKFSCYSQEMVDEIFRNAAMAAIDARIELAKAAVLETGMGLVEDKVIKNHFAGEYIYNKYKDEKTCGIIERNEPYGITKIAEPIGVVAAIIPVTNPTSTTIFKSLISLKTRNGIFFSPHPRAKKSTILAAKTILDAAVKSGAPENIIGWIDEPSIELTQYLMQKADITLATGGPSLVKSAYSSGKPAIGVGPGNTPVIIDESAHIKMAVSSIILSKTYDNGVICASEQSVIVLKSIYNKVKDEFQERGAYIIKKNELDKVREVIFKDGSVNPKIVGQSAYTIAAMAGIKVPKTTRILIGEVTSLGEEEPFAHEKLSPVLAMYEADNFDDALKKAVTLINLGGLGHTSGIYADEIKARDKIDRFSSAMKTVRTFVNIPTSQGASGDLYNFRIPPSFTLGCGFWGGNSVSENVGPKHLLNIKTVAERRENMLWFRVPHKVYFKFGCLQFALKDLKDLKKKRAFIVTDSDPYNLNYVDSIIKILEHLDIDFKVFNKVGREADLKTIKKATEEMSSFMPDTIIALGGTPEMSSAKLMWVLYEHPEVKFEDLAIKFMDIRKRIYTFPKLGKKAMLVAITTSAGSGSEVTPFALVTDNNTGNKYMLADYEMTPNMAIVDAELMMKMPKGLTAYSGIDALVNSIEAYTSVYASEYTNGLALEAIRLIFKYLPEAYKNGRTNEKAREKMAHASTMAGMASANAFLGLCHSMAIKLSSEHNIPSGIANALLIEEVIKFNAVDNPVKQAPCPQYKYPNTIFRYARIADYIKLGGNTDEEKVDLLINKIHELKKALNIPTSIKDAGVLEENFYSSLDRISELALDDQCTGANPRFPLTSEIKEMYINCFKKQP</sequence>
<protein>
    <recommendedName>
        <fullName evidence="5">Aldehyde-alcohol dehydrogenase</fullName>
        <shortName evidence="5">AAD</shortName>
    </recommendedName>
    <domain>
        <recommendedName>
            <fullName evidence="5">Alcohol dehydrogenase</fullName>
            <shortName evidence="5">ADH</shortName>
            <ecNumber evidence="3">1.1.1.1</ecNumber>
        </recommendedName>
    </domain>
    <domain>
        <recommendedName>
            <fullName evidence="5">Aldehyde dehydrogenase</fullName>
            <shortName evidence="5">ALDH</shortName>
            <ecNumber evidence="3">1.2.1.3</ecNumber>
        </recommendedName>
    </domain>
</protein>
<comment type="function">
    <text evidence="3">Has both aldehyde and alcohol dehydrogenase activities. Can use acetaldehyde, butyraldehyde, butanol and ethanol.</text>
</comment>
<comment type="catalytic activity">
    <reaction evidence="3">
        <text>a primary alcohol + NAD(+) = an aldehyde + NADH + H(+)</text>
        <dbReference type="Rhea" id="RHEA:10736"/>
        <dbReference type="ChEBI" id="CHEBI:15378"/>
        <dbReference type="ChEBI" id="CHEBI:15734"/>
        <dbReference type="ChEBI" id="CHEBI:17478"/>
        <dbReference type="ChEBI" id="CHEBI:57540"/>
        <dbReference type="ChEBI" id="CHEBI:57945"/>
        <dbReference type="EC" id="1.1.1.1"/>
    </reaction>
</comment>
<comment type="catalytic activity">
    <reaction evidence="3">
        <text>a secondary alcohol + NAD(+) = a ketone + NADH + H(+)</text>
        <dbReference type="Rhea" id="RHEA:10740"/>
        <dbReference type="ChEBI" id="CHEBI:15378"/>
        <dbReference type="ChEBI" id="CHEBI:17087"/>
        <dbReference type="ChEBI" id="CHEBI:35681"/>
        <dbReference type="ChEBI" id="CHEBI:57540"/>
        <dbReference type="ChEBI" id="CHEBI:57945"/>
        <dbReference type="EC" id="1.1.1.1"/>
    </reaction>
</comment>
<comment type="catalytic activity">
    <reaction evidence="3">
        <text>an aldehyde + NAD(+) + H2O = a carboxylate + NADH + 2 H(+)</text>
        <dbReference type="Rhea" id="RHEA:16185"/>
        <dbReference type="ChEBI" id="CHEBI:15377"/>
        <dbReference type="ChEBI" id="CHEBI:15378"/>
        <dbReference type="ChEBI" id="CHEBI:17478"/>
        <dbReference type="ChEBI" id="CHEBI:29067"/>
        <dbReference type="ChEBI" id="CHEBI:57540"/>
        <dbReference type="ChEBI" id="CHEBI:57945"/>
        <dbReference type="EC" id="1.2.1.3"/>
    </reaction>
</comment>
<comment type="induction">
    <text evidence="3">Induced during switch to solvent production.</text>
</comment>
<comment type="similarity">
    <text evidence="6">In the N-terminal section; belongs to the aldehyde dehydrogenase family.</text>
</comment>
<comment type="similarity">
    <text evidence="6">In the C-terminal section; belongs to the iron-containing alcohol dehydrogenase family.</text>
</comment>
<name>ADHE_CLOAB</name>
<keyword id="KW-0511">Multifunctional enzyme</keyword>
<keyword id="KW-0520">NAD</keyword>
<keyword id="KW-0560">Oxidoreductase</keyword>
<keyword id="KW-0614">Plasmid</keyword>
<keyword id="KW-1185">Reference proteome</keyword>
<organism>
    <name type="scientific">Clostridium acetobutylicum (strain ATCC 824 / DSM 792 / JCM 1419 / IAM 19013 / LMG 5710 / NBRC 13948 / NRRL B-527 / VKM B-1787 / 2291 / W)</name>
    <dbReference type="NCBI Taxonomy" id="272562"/>
    <lineage>
        <taxon>Bacteria</taxon>
        <taxon>Bacillati</taxon>
        <taxon>Bacillota</taxon>
        <taxon>Clostridia</taxon>
        <taxon>Eubacteriales</taxon>
        <taxon>Clostridiaceae</taxon>
        <taxon>Clostridium</taxon>
    </lineage>
</organism>